<keyword id="KW-0002">3D-structure</keyword>
<keyword id="KW-0131">Cell cycle</keyword>
<keyword id="KW-0963">Cytoplasm</keyword>
<keyword id="KW-0342">GTP-binding</keyword>
<keyword id="KW-0378">Hydrolase</keyword>
<keyword id="KW-0866">Nonsense-mediated mRNA decay</keyword>
<keyword id="KW-0547">Nucleotide-binding</keyword>
<keyword id="KW-0648">Protein biosynthesis</keyword>
<keyword id="KW-1267">Proteomics identification</keyword>
<keyword id="KW-1185">Reference proteome</keyword>
<proteinExistence type="evidence at protein level"/>
<organism>
    <name type="scientific">Homo sapiens</name>
    <name type="common">Human</name>
    <dbReference type="NCBI Taxonomy" id="9606"/>
    <lineage>
        <taxon>Eukaryota</taxon>
        <taxon>Metazoa</taxon>
        <taxon>Chordata</taxon>
        <taxon>Craniata</taxon>
        <taxon>Vertebrata</taxon>
        <taxon>Euteleostomi</taxon>
        <taxon>Mammalia</taxon>
        <taxon>Eutheria</taxon>
        <taxon>Euarchontoglires</taxon>
        <taxon>Primates</taxon>
        <taxon>Haplorrhini</taxon>
        <taxon>Catarrhini</taxon>
        <taxon>Hominidae</taxon>
        <taxon>Homo</taxon>
    </lineage>
</organism>
<dbReference type="EC" id="3.6.5.-" evidence="12"/>
<dbReference type="EMBL" id="AJ251548">
    <property type="protein sequence ID" value="CAB91089.1"/>
    <property type="molecule type" value="mRNA"/>
</dbReference>
<dbReference type="EMBL" id="AK001303">
    <property type="protein sequence ID" value="BAA91612.1"/>
    <property type="molecule type" value="mRNA"/>
</dbReference>
<dbReference type="EMBL" id="AL929101">
    <property type="status" value="NOT_ANNOTATED_CDS"/>
    <property type="molecule type" value="Genomic_DNA"/>
</dbReference>
<dbReference type="EMBL" id="CH471230">
    <property type="protein sequence ID" value="EAW62898.1"/>
    <property type="molecule type" value="Genomic_DNA"/>
</dbReference>
<dbReference type="EMBL" id="BC036077">
    <property type="protein sequence ID" value="AAH36077.1"/>
    <property type="molecule type" value="mRNA"/>
</dbReference>
<dbReference type="CCDS" id="CCDS14336.1"/>
<dbReference type="RefSeq" id="NP_060564.2">
    <property type="nucleotide sequence ID" value="NM_018094.4"/>
</dbReference>
<dbReference type="PDB" id="3KUJ">
    <property type="method" value="X-ray"/>
    <property type="resolution" value="1.40 A"/>
    <property type="chains" value="B=59-73"/>
</dbReference>
<dbReference type="PDBsum" id="3KUJ"/>
<dbReference type="BMRB" id="Q8IYD1"/>
<dbReference type="EMDB" id="EMD-2813"/>
<dbReference type="SMR" id="Q8IYD1"/>
<dbReference type="BioGRID" id="117221">
    <property type="interactions" value="114"/>
</dbReference>
<dbReference type="ComplexPortal" id="CPX-8923">
    <property type="entry name" value="ERF1-ERF3 translation release factor complex, GSPT2 variant"/>
</dbReference>
<dbReference type="CORUM" id="Q8IYD1"/>
<dbReference type="FunCoup" id="Q8IYD1">
    <property type="interactions" value="1007"/>
</dbReference>
<dbReference type="IntAct" id="Q8IYD1">
    <property type="interactions" value="70"/>
</dbReference>
<dbReference type="STRING" id="9606.ENSP00000341247"/>
<dbReference type="ChEMBL" id="CHEMBL4105974"/>
<dbReference type="GlyGen" id="Q8IYD1">
    <property type="glycosylation" value="1 site, 1 O-linked glycan (1 site)"/>
</dbReference>
<dbReference type="iPTMnet" id="Q8IYD1"/>
<dbReference type="PhosphoSitePlus" id="Q8IYD1"/>
<dbReference type="SwissPalm" id="Q8IYD1"/>
<dbReference type="BioMuta" id="GSPT2"/>
<dbReference type="DMDM" id="182647413"/>
<dbReference type="jPOST" id="Q8IYD1"/>
<dbReference type="MassIVE" id="Q8IYD1"/>
<dbReference type="PaxDb" id="9606-ENSP00000341247"/>
<dbReference type="PeptideAtlas" id="Q8IYD1"/>
<dbReference type="ProteomicsDB" id="71156"/>
<dbReference type="Pumba" id="Q8IYD1"/>
<dbReference type="Antibodypedia" id="26328">
    <property type="antibodies" value="188 antibodies from 23 providers"/>
</dbReference>
<dbReference type="DNASU" id="23708"/>
<dbReference type="Ensembl" id="ENST00000340438.6">
    <property type="protein sequence ID" value="ENSP00000341247.4"/>
    <property type="gene ID" value="ENSG00000189369.9"/>
</dbReference>
<dbReference type="GeneID" id="23708"/>
<dbReference type="KEGG" id="hsa:23708"/>
<dbReference type="MANE-Select" id="ENST00000340438.6">
    <property type="protein sequence ID" value="ENSP00000341247.4"/>
    <property type="RefSeq nucleotide sequence ID" value="NM_018094.5"/>
    <property type="RefSeq protein sequence ID" value="NP_060564.2"/>
</dbReference>
<dbReference type="UCSC" id="uc004dpl.4">
    <property type="organism name" value="human"/>
</dbReference>
<dbReference type="AGR" id="HGNC:4622"/>
<dbReference type="CTD" id="23708"/>
<dbReference type="DisGeNET" id="23708"/>
<dbReference type="GeneCards" id="GSPT2"/>
<dbReference type="HGNC" id="HGNC:4622">
    <property type="gene designation" value="GSPT2"/>
</dbReference>
<dbReference type="HPA" id="ENSG00000189369">
    <property type="expression patterns" value="Low tissue specificity"/>
</dbReference>
<dbReference type="MalaCards" id="GSPT2"/>
<dbReference type="MIM" id="300418">
    <property type="type" value="gene"/>
</dbReference>
<dbReference type="neXtProt" id="NX_Q8IYD1"/>
<dbReference type="OpenTargets" id="ENSG00000189369"/>
<dbReference type="PharmGKB" id="PA29013"/>
<dbReference type="VEuPathDB" id="HostDB:ENSG00000189369"/>
<dbReference type="eggNOG" id="KOG0459">
    <property type="taxonomic scope" value="Eukaryota"/>
</dbReference>
<dbReference type="GeneTree" id="ENSGT00940000163245"/>
<dbReference type="HOGENOM" id="CLU_007265_3_8_1"/>
<dbReference type="InParanoid" id="Q8IYD1"/>
<dbReference type="OMA" id="IERYEEC"/>
<dbReference type="OrthoDB" id="342024at2759"/>
<dbReference type="PAN-GO" id="Q8IYD1">
    <property type="GO annotations" value="4 GO annotations based on evolutionary models"/>
</dbReference>
<dbReference type="PhylomeDB" id="Q8IYD1"/>
<dbReference type="TreeFam" id="TF300566"/>
<dbReference type="PathwayCommons" id="Q8IYD1"/>
<dbReference type="Reactome" id="R-HSA-72764">
    <property type="pathway name" value="Eukaryotic Translation Termination"/>
</dbReference>
<dbReference type="Reactome" id="R-HSA-9010553">
    <property type="pathway name" value="Regulation of expression of SLITs and ROBOs"/>
</dbReference>
<dbReference type="Reactome" id="R-HSA-975956">
    <property type="pathway name" value="Nonsense Mediated Decay (NMD) independent of the Exon Junction Complex (EJC)"/>
</dbReference>
<dbReference type="Reactome" id="R-HSA-975957">
    <property type="pathway name" value="Nonsense Mediated Decay (NMD) enhanced by the Exon Junction Complex (EJC)"/>
</dbReference>
<dbReference type="SignaLink" id="Q8IYD1"/>
<dbReference type="BioGRID-ORCS" id="23708">
    <property type="hits" value="13 hits in 783 CRISPR screens"/>
</dbReference>
<dbReference type="CD-CODE" id="DEE660B4">
    <property type="entry name" value="Stress granule"/>
</dbReference>
<dbReference type="ChiTaRS" id="GSPT2">
    <property type="organism name" value="human"/>
</dbReference>
<dbReference type="GeneWiki" id="GSPT2"/>
<dbReference type="GenomeRNAi" id="23708"/>
<dbReference type="Pharos" id="Q8IYD1">
    <property type="development level" value="Tchem"/>
</dbReference>
<dbReference type="PRO" id="PR:Q8IYD1"/>
<dbReference type="Proteomes" id="UP000005640">
    <property type="component" value="Chromosome X"/>
</dbReference>
<dbReference type="RNAct" id="Q8IYD1">
    <property type="molecule type" value="protein"/>
</dbReference>
<dbReference type="Bgee" id="ENSG00000189369">
    <property type="expression patterns" value="Expressed in sperm and 193 other cell types or tissues"/>
</dbReference>
<dbReference type="GO" id="GO:0005829">
    <property type="term" value="C:cytosol"/>
    <property type="evidence" value="ECO:0000304"/>
    <property type="project" value="Reactome"/>
</dbReference>
<dbReference type="GO" id="GO:0018444">
    <property type="term" value="C:translation release factor complex"/>
    <property type="evidence" value="ECO:0000318"/>
    <property type="project" value="GO_Central"/>
</dbReference>
<dbReference type="GO" id="GO:0005525">
    <property type="term" value="F:GTP binding"/>
    <property type="evidence" value="ECO:0007669"/>
    <property type="project" value="UniProtKB-KW"/>
</dbReference>
<dbReference type="GO" id="GO:0003924">
    <property type="term" value="F:GTPase activity"/>
    <property type="evidence" value="ECO:0000314"/>
    <property type="project" value="UniProtKB"/>
</dbReference>
<dbReference type="GO" id="GO:0003723">
    <property type="term" value="F:RNA binding"/>
    <property type="evidence" value="ECO:0007005"/>
    <property type="project" value="UniProtKB"/>
</dbReference>
<dbReference type="GO" id="GO:0003747">
    <property type="term" value="F:translation release factor activity"/>
    <property type="evidence" value="ECO:0000314"/>
    <property type="project" value="UniProtKB"/>
</dbReference>
<dbReference type="GO" id="GO:0000184">
    <property type="term" value="P:nuclear-transcribed mRNA catabolic process, nonsense-mediated decay"/>
    <property type="evidence" value="ECO:0007669"/>
    <property type="project" value="UniProtKB-KW"/>
</dbReference>
<dbReference type="GO" id="GO:0006412">
    <property type="term" value="P:translation"/>
    <property type="evidence" value="ECO:0000318"/>
    <property type="project" value="GO_Central"/>
</dbReference>
<dbReference type="GO" id="GO:0006415">
    <property type="term" value="P:translational termination"/>
    <property type="evidence" value="ECO:0000314"/>
    <property type="project" value="UniProtKB"/>
</dbReference>
<dbReference type="CDD" id="cd01883">
    <property type="entry name" value="EF1_alpha"/>
    <property type="match status" value="1"/>
</dbReference>
<dbReference type="CDD" id="cd03704">
    <property type="entry name" value="eRF3_C_III"/>
    <property type="match status" value="1"/>
</dbReference>
<dbReference type="CDD" id="cd04089">
    <property type="entry name" value="eRF3_II"/>
    <property type="match status" value="1"/>
</dbReference>
<dbReference type="FunFam" id="2.40.30.10:FF:000017">
    <property type="entry name" value="Eukaryotic peptide chain release factor GTP-binding subunit"/>
    <property type="match status" value="1"/>
</dbReference>
<dbReference type="FunFam" id="2.40.30.10:FF:000024">
    <property type="entry name" value="Eukaryotic peptide chain release factor GTP-binding subunit ERF3A"/>
    <property type="match status" value="1"/>
</dbReference>
<dbReference type="FunFam" id="3.40.50.300:FF:000270">
    <property type="entry name" value="Eukaryotic peptide chain release factor GTP-binding subunit ERF3A"/>
    <property type="match status" value="1"/>
</dbReference>
<dbReference type="Gene3D" id="3.40.50.300">
    <property type="entry name" value="P-loop containing nucleotide triphosphate hydrolases"/>
    <property type="match status" value="1"/>
</dbReference>
<dbReference type="Gene3D" id="2.40.30.10">
    <property type="entry name" value="Translation factors"/>
    <property type="match status" value="2"/>
</dbReference>
<dbReference type="IDEAL" id="IID00573"/>
<dbReference type="InterPro" id="IPR004161">
    <property type="entry name" value="EFTu-like_2"/>
</dbReference>
<dbReference type="InterPro" id="IPR031157">
    <property type="entry name" value="G_TR_CS"/>
</dbReference>
<dbReference type="InterPro" id="IPR054696">
    <property type="entry name" value="GTP-eEF1A_C"/>
</dbReference>
<dbReference type="InterPro" id="IPR027417">
    <property type="entry name" value="P-loop_NTPase"/>
</dbReference>
<dbReference type="InterPro" id="IPR009818">
    <property type="entry name" value="PAM2_motif"/>
</dbReference>
<dbReference type="InterPro" id="IPR000795">
    <property type="entry name" value="T_Tr_GTP-bd_dom"/>
</dbReference>
<dbReference type="InterPro" id="IPR050100">
    <property type="entry name" value="TRAFAC_GTPase_members"/>
</dbReference>
<dbReference type="InterPro" id="IPR009000">
    <property type="entry name" value="Transl_B-barrel_sf"/>
</dbReference>
<dbReference type="InterPro" id="IPR009001">
    <property type="entry name" value="Transl_elong_EF1A/Init_IF2_C"/>
</dbReference>
<dbReference type="PANTHER" id="PTHR23115">
    <property type="entry name" value="TRANSLATION FACTOR"/>
    <property type="match status" value="1"/>
</dbReference>
<dbReference type="Pfam" id="PF22594">
    <property type="entry name" value="GTP-eEF1A_C"/>
    <property type="match status" value="1"/>
</dbReference>
<dbReference type="Pfam" id="PF00009">
    <property type="entry name" value="GTP_EFTU"/>
    <property type="match status" value="1"/>
</dbReference>
<dbReference type="Pfam" id="PF03144">
    <property type="entry name" value="GTP_EFTU_D2"/>
    <property type="match status" value="1"/>
</dbReference>
<dbReference type="Pfam" id="PF07145">
    <property type="entry name" value="PAM2"/>
    <property type="match status" value="1"/>
</dbReference>
<dbReference type="PRINTS" id="PR00315">
    <property type="entry name" value="ELONGATNFCT"/>
</dbReference>
<dbReference type="SUPFAM" id="SSF50465">
    <property type="entry name" value="EF-Tu/eEF-1alpha/eIF2-gamma C-terminal domain"/>
    <property type="match status" value="1"/>
</dbReference>
<dbReference type="SUPFAM" id="SSF52540">
    <property type="entry name" value="P-loop containing nucleoside triphosphate hydrolases"/>
    <property type="match status" value="1"/>
</dbReference>
<dbReference type="SUPFAM" id="SSF50447">
    <property type="entry name" value="Translation proteins"/>
    <property type="match status" value="1"/>
</dbReference>
<dbReference type="PROSITE" id="PS00301">
    <property type="entry name" value="G_TR_1"/>
    <property type="match status" value="1"/>
</dbReference>
<dbReference type="PROSITE" id="PS51722">
    <property type="entry name" value="G_TR_2"/>
    <property type="match status" value="1"/>
</dbReference>
<sequence>MDSGSSSSDSAPDCWDQVDMESPGSAPSGDGVSSAVAEAQREPLSSAFSRKLNVNAKPFVPNVHAAEFVPSFLRGPTQPPTLPAGSGSNDETCTGAGYPQGKRMGRGAPVEPSREEPLVSLEGSNSAVTMELSEPVVENGEVEMALEESWEHSKEVSEAEPGGGSSGDSGPPEESGQEMMEEKEEIRKSKSVIVPSGAPKKEHVNVVFIGHVDAGKSTIGGQIMFLTGMVDKRTLEKYEREAKEKNRETWYLSWALDTNQEERDKGKTVEVGRAYFETERKHFTILDAPGHKSFVPNMIGGASQADLAVLVISARKGEFETGFEKGGQTREHAMLAKTAGVKHLIVLINKMDDPTVNWSIERYEECKEKLVPFLKKVGFSPKKDIHFMPCSGLTGANIKEQSDFCPWYTGLPFIPYLDNLPNFNRSIDGPIRLPIVDKYKDMGTVVLGKLESGSIFKGQQLVMMPNKHNVEVLGILSDDTETDFVAPGENLKIRLKGIEEEEILPGFILCDPSNLCHSGRTFDVQIVIIEHKSIICPGYNAVLHIHTCIEEVEITALISLVDKKSGEKSKTRPRFVKQDQVCIARLRTAGTICLETFKDFPQMGRFTLRDEGKTIAIGKVLKLVPEKD</sequence>
<gene>
    <name type="primary">GSPT2</name>
    <name type="synonym">ERF3B</name>
</gene>
<protein>
    <recommendedName>
        <fullName>Eukaryotic peptide chain release factor GTP-binding subunit ERF3B</fullName>
        <shortName>Eukaryotic peptide chain release factor subunit 3b</shortName>
        <shortName>eRF3b</shortName>
        <ecNumber evidence="12">3.6.5.-</ecNumber>
    </recommendedName>
    <alternativeName>
        <fullName>G1 to S phase transition protein 2 homolog</fullName>
    </alternativeName>
</protein>
<feature type="chain" id="PRO_0000327256" description="Eukaryotic peptide chain release factor GTP-binding subunit ERF3B">
    <location>
        <begin position="1"/>
        <end position="628"/>
    </location>
</feature>
<feature type="domain" description="tr-type G" evidence="2">
    <location>
        <begin position="201"/>
        <end position="425"/>
    </location>
</feature>
<feature type="region of interest" description="Disordered" evidence="3">
    <location>
        <begin position="1"/>
        <end position="49"/>
    </location>
</feature>
<feature type="region of interest" description="Disordered" evidence="3">
    <location>
        <begin position="72"/>
        <end position="124"/>
    </location>
</feature>
<feature type="region of interest" description="Disordered" evidence="3">
    <location>
        <begin position="146"/>
        <end position="195"/>
    </location>
</feature>
<feature type="region of interest" description="G1" evidence="2">
    <location>
        <begin position="210"/>
        <end position="217"/>
    </location>
</feature>
<feature type="region of interest" description="G2" evidence="2">
    <location>
        <begin position="266"/>
        <end position="270"/>
    </location>
</feature>
<feature type="region of interest" description="G3" evidence="2">
    <location>
        <begin position="287"/>
        <end position="290"/>
    </location>
</feature>
<feature type="region of interest" description="G4" evidence="2">
    <location>
        <begin position="349"/>
        <end position="352"/>
    </location>
</feature>
<feature type="region of interest" description="G5" evidence="2">
    <location>
        <begin position="391"/>
        <end position="393"/>
    </location>
</feature>
<feature type="compositionally biased region" description="Low complexity" evidence="3">
    <location>
        <begin position="1"/>
        <end position="10"/>
    </location>
</feature>
<feature type="binding site" evidence="1">
    <location>
        <begin position="213"/>
        <end position="218"/>
    </location>
    <ligand>
        <name>GTP</name>
        <dbReference type="ChEBI" id="CHEBI:37565"/>
    </ligand>
</feature>
<feature type="binding site" evidence="1">
    <location>
        <begin position="349"/>
        <end position="352"/>
    </location>
    <ligand>
        <name>GTP</name>
        <dbReference type="ChEBI" id="CHEBI:37565"/>
    </ligand>
</feature>
<feature type="binding site" evidence="1">
    <location>
        <begin position="391"/>
        <end position="393"/>
    </location>
    <ligand>
        <name>GTP</name>
        <dbReference type="ChEBI" id="CHEBI:37565"/>
    </ligand>
</feature>
<feature type="sequence variant" id="VAR_042431" description="In dbSNP:rs17855593." evidence="5">
    <original>P</original>
    <variation>T</variation>
    <location>
        <position position="23"/>
    </location>
</feature>
<feature type="mutagenesis site" description="Impairs interaction with UPF1 and PABPC1; when associated with A-55, K-56 and A-59." evidence="9">
    <original>L</original>
    <variation>K</variation>
    <location>
        <position position="52"/>
    </location>
</feature>
<feature type="mutagenesis site" description="Impairs interaction with UPF1 and PABPC1; when associated with K-52, K-56 and A-59." evidence="9">
    <original>N</original>
    <variation>A</variation>
    <location>
        <position position="55"/>
    </location>
</feature>
<feature type="mutagenesis site" description="Impairs interaction with UPF1 and PABPC1; when associated with K52, A-55, and A-59." evidence="9">
    <original>A</original>
    <variation>K</variation>
    <location>
        <position position="56"/>
    </location>
</feature>
<feature type="mutagenesis site" description="Impairs interaction with UPF1 and PABPC1; when associated with K-52, A-55 and K-56." evidence="9">
    <original>F</original>
    <variation>A</variation>
    <location>
        <position position="59"/>
    </location>
</feature>
<feature type="sequence conflict" description="In Ref. 2; BAA91612." evidence="11" ref="2">
    <original>S</original>
    <variation>L</variation>
    <location>
        <position position="25"/>
    </location>
</feature>
<feature type="sequence conflict" description="In Ref. 2; BAA91612." evidence="11" ref="2">
    <original>V</original>
    <variation>A</variation>
    <location>
        <position position="119"/>
    </location>
</feature>
<feature type="sequence conflict" description="In Ref. 2; BAA91612." evidence="11" ref="2">
    <original>S</original>
    <variation>G</variation>
    <location>
        <position position="293"/>
    </location>
</feature>
<feature type="sequence conflict" description="In Ref. 5; AAH36077." evidence="11" ref="5">
    <original>P</original>
    <variation>H</variation>
    <location>
        <position position="354"/>
    </location>
</feature>
<feature type="sequence conflict" description="In Ref. 5; AAH36077." evidence="11" ref="5">
    <original>P</original>
    <variation>Q</variation>
    <location>
        <position position="625"/>
    </location>
</feature>
<accession>Q8IYD1</accession>
<accession>Q9H909</accession>
<accession>Q9NVY0</accession>
<accession>Q9NY44</accession>
<evidence type="ECO:0000250" key="1">
    <source>
        <dbReference type="UniProtKB" id="O74718"/>
    </source>
</evidence>
<evidence type="ECO:0000255" key="2">
    <source>
        <dbReference type="PROSITE-ProRule" id="PRU01059"/>
    </source>
</evidence>
<evidence type="ECO:0000256" key="3">
    <source>
        <dbReference type="SAM" id="MobiDB-lite"/>
    </source>
</evidence>
<evidence type="ECO:0000269" key="4">
    <source>
    </source>
</evidence>
<evidence type="ECO:0000269" key="5">
    <source>
    </source>
</evidence>
<evidence type="ECO:0000269" key="6">
    <source>
    </source>
</evidence>
<evidence type="ECO:0000269" key="7">
    <source>
    </source>
</evidence>
<evidence type="ECO:0000269" key="8">
    <source>
    </source>
</evidence>
<evidence type="ECO:0000269" key="9">
    <source>
    </source>
</evidence>
<evidence type="ECO:0000269" key="10">
    <source>
    </source>
</evidence>
<evidence type="ECO:0000305" key="11"/>
<evidence type="ECO:0000305" key="12">
    <source>
    </source>
</evidence>
<evidence type="ECO:0007744" key="13">
    <source>
        <dbReference type="PDB" id="3KUJ"/>
    </source>
</evidence>
<reference key="1">
    <citation type="journal article" date="2001" name="Mol. Biol. (Mosk.)">
        <title>Identification of a novel termination release factor eRF3b expressing the eRF3 activity in vitro and in vivo.</title>
        <authorList>
            <person name="Jakobsen C.G."/>
            <person name="Segaard T.M."/>
            <person name="Jean-Jean O."/>
            <person name="Frolova L."/>
            <person name="Justesen J."/>
        </authorList>
    </citation>
    <scope>NUCLEOTIDE SEQUENCE [MRNA]</scope>
    <scope>FUNCTION</scope>
</reference>
<reference key="2">
    <citation type="journal article" date="2004" name="Nat. Genet.">
        <title>Complete sequencing and characterization of 21,243 full-length human cDNAs.</title>
        <authorList>
            <person name="Ota T."/>
            <person name="Suzuki Y."/>
            <person name="Nishikawa T."/>
            <person name="Otsuki T."/>
            <person name="Sugiyama T."/>
            <person name="Irie R."/>
            <person name="Wakamatsu A."/>
            <person name="Hayashi K."/>
            <person name="Sato H."/>
            <person name="Nagai K."/>
            <person name="Kimura K."/>
            <person name="Makita H."/>
            <person name="Sekine M."/>
            <person name="Obayashi M."/>
            <person name="Nishi T."/>
            <person name="Shibahara T."/>
            <person name="Tanaka T."/>
            <person name="Ishii S."/>
            <person name="Yamamoto J."/>
            <person name="Saito K."/>
            <person name="Kawai Y."/>
            <person name="Isono Y."/>
            <person name="Nakamura Y."/>
            <person name="Nagahari K."/>
            <person name="Murakami K."/>
            <person name="Yasuda T."/>
            <person name="Iwayanagi T."/>
            <person name="Wagatsuma M."/>
            <person name="Shiratori A."/>
            <person name="Sudo H."/>
            <person name="Hosoiri T."/>
            <person name="Kaku Y."/>
            <person name="Kodaira H."/>
            <person name="Kondo H."/>
            <person name="Sugawara M."/>
            <person name="Takahashi M."/>
            <person name="Kanda K."/>
            <person name="Yokoi T."/>
            <person name="Furuya T."/>
            <person name="Kikkawa E."/>
            <person name="Omura Y."/>
            <person name="Abe K."/>
            <person name="Kamihara K."/>
            <person name="Katsuta N."/>
            <person name="Sato K."/>
            <person name="Tanikawa M."/>
            <person name="Yamazaki M."/>
            <person name="Ninomiya K."/>
            <person name="Ishibashi T."/>
            <person name="Yamashita H."/>
            <person name="Murakawa K."/>
            <person name="Fujimori K."/>
            <person name="Tanai H."/>
            <person name="Kimata M."/>
            <person name="Watanabe M."/>
            <person name="Hiraoka S."/>
            <person name="Chiba Y."/>
            <person name="Ishida S."/>
            <person name="Ono Y."/>
            <person name="Takiguchi S."/>
            <person name="Watanabe S."/>
            <person name="Yosida M."/>
            <person name="Hotuta T."/>
            <person name="Kusano J."/>
            <person name="Kanehori K."/>
            <person name="Takahashi-Fujii A."/>
            <person name="Hara H."/>
            <person name="Tanase T.-O."/>
            <person name="Nomura Y."/>
            <person name="Togiya S."/>
            <person name="Komai F."/>
            <person name="Hara R."/>
            <person name="Takeuchi K."/>
            <person name="Arita M."/>
            <person name="Imose N."/>
            <person name="Musashino K."/>
            <person name="Yuuki H."/>
            <person name="Oshima A."/>
            <person name="Sasaki N."/>
            <person name="Aotsuka S."/>
            <person name="Yoshikawa Y."/>
            <person name="Matsunawa H."/>
            <person name="Ichihara T."/>
            <person name="Shiohata N."/>
            <person name="Sano S."/>
            <person name="Moriya S."/>
            <person name="Momiyama H."/>
            <person name="Satoh N."/>
            <person name="Takami S."/>
            <person name="Terashima Y."/>
            <person name="Suzuki O."/>
            <person name="Nakagawa S."/>
            <person name="Senoh A."/>
            <person name="Mizoguchi H."/>
            <person name="Goto Y."/>
            <person name="Shimizu F."/>
            <person name="Wakebe H."/>
            <person name="Hishigaki H."/>
            <person name="Watanabe T."/>
            <person name="Sugiyama A."/>
            <person name="Takemoto M."/>
            <person name="Kawakami B."/>
            <person name="Yamazaki M."/>
            <person name="Watanabe K."/>
            <person name="Kumagai A."/>
            <person name="Itakura S."/>
            <person name="Fukuzumi Y."/>
            <person name="Fujimori Y."/>
            <person name="Komiyama M."/>
            <person name="Tashiro H."/>
            <person name="Tanigami A."/>
            <person name="Fujiwara T."/>
            <person name="Ono T."/>
            <person name="Yamada K."/>
            <person name="Fujii Y."/>
            <person name="Ozaki K."/>
            <person name="Hirao M."/>
            <person name="Ohmori Y."/>
            <person name="Kawabata A."/>
            <person name="Hikiji T."/>
            <person name="Kobatake N."/>
            <person name="Inagaki H."/>
            <person name="Ikema Y."/>
            <person name="Okamoto S."/>
            <person name="Okitani R."/>
            <person name="Kawakami T."/>
            <person name="Noguchi S."/>
            <person name="Itoh T."/>
            <person name="Shigeta K."/>
            <person name="Senba T."/>
            <person name="Matsumura K."/>
            <person name="Nakajima Y."/>
            <person name="Mizuno T."/>
            <person name="Morinaga M."/>
            <person name="Sasaki M."/>
            <person name="Togashi T."/>
            <person name="Oyama M."/>
            <person name="Hata H."/>
            <person name="Watanabe M."/>
            <person name="Komatsu T."/>
            <person name="Mizushima-Sugano J."/>
            <person name="Satoh T."/>
            <person name="Shirai Y."/>
            <person name="Takahashi Y."/>
            <person name="Nakagawa K."/>
            <person name="Okumura K."/>
            <person name="Nagase T."/>
            <person name="Nomura N."/>
            <person name="Kikuchi H."/>
            <person name="Masuho Y."/>
            <person name="Yamashita R."/>
            <person name="Nakai K."/>
            <person name="Yada T."/>
            <person name="Nakamura Y."/>
            <person name="Ohara O."/>
            <person name="Isogai T."/>
            <person name="Sugano S."/>
        </authorList>
    </citation>
    <scope>NUCLEOTIDE SEQUENCE [LARGE SCALE MRNA]</scope>
    <source>
        <tissue>Teratocarcinoma</tissue>
    </source>
</reference>
<reference key="3">
    <citation type="journal article" date="2005" name="Nature">
        <title>The DNA sequence of the human X chromosome.</title>
        <authorList>
            <person name="Ross M.T."/>
            <person name="Grafham D.V."/>
            <person name="Coffey A.J."/>
            <person name="Scherer S."/>
            <person name="McLay K."/>
            <person name="Muzny D."/>
            <person name="Platzer M."/>
            <person name="Howell G.R."/>
            <person name="Burrows C."/>
            <person name="Bird C.P."/>
            <person name="Frankish A."/>
            <person name="Lovell F.L."/>
            <person name="Howe K.L."/>
            <person name="Ashurst J.L."/>
            <person name="Fulton R.S."/>
            <person name="Sudbrak R."/>
            <person name="Wen G."/>
            <person name="Jones M.C."/>
            <person name="Hurles M.E."/>
            <person name="Andrews T.D."/>
            <person name="Scott C.E."/>
            <person name="Searle S."/>
            <person name="Ramser J."/>
            <person name="Whittaker A."/>
            <person name="Deadman R."/>
            <person name="Carter N.P."/>
            <person name="Hunt S.E."/>
            <person name="Chen R."/>
            <person name="Cree A."/>
            <person name="Gunaratne P."/>
            <person name="Havlak P."/>
            <person name="Hodgson A."/>
            <person name="Metzker M.L."/>
            <person name="Richards S."/>
            <person name="Scott G."/>
            <person name="Steffen D."/>
            <person name="Sodergren E."/>
            <person name="Wheeler D.A."/>
            <person name="Worley K.C."/>
            <person name="Ainscough R."/>
            <person name="Ambrose K.D."/>
            <person name="Ansari-Lari M.A."/>
            <person name="Aradhya S."/>
            <person name="Ashwell R.I."/>
            <person name="Babbage A.K."/>
            <person name="Bagguley C.L."/>
            <person name="Ballabio A."/>
            <person name="Banerjee R."/>
            <person name="Barker G.E."/>
            <person name="Barlow K.F."/>
            <person name="Barrett I.P."/>
            <person name="Bates K.N."/>
            <person name="Beare D.M."/>
            <person name="Beasley H."/>
            <person name="Beasley O."/>
            <person name="Beck A."/>
            <person name="Bethel G."/>
            <person name="Blechschmidt K."/>
            <person name="Brady N."/>
            <person name="Bray-Allen S."/>
            <person name="Bridgeman A.M."/>
            <person name="Brown A.J."/>
            <person name="Brown M.J."/>
            <person name="Bonnin D."/>
            <person name="Bruford E.A."/>
            <person name="Buhay C."/>
            <person name="Burch P."/>
            <person name="Burford D."/>
            <person name="Burgess J."/>
            <person name="Burrill W."/>
            <person name="Burton J."/>
            <person name="Bye J.M."/>
            <person name="Carder C."/>
            <person name="Carrel L."/>
            <person name="Chako J."/>
            <person name="Chapman J.C."/>
            <person name="Chavez D."/>
            <person name="Chen E."/>
            <person name="Chen G."/>
            <person name="Chen Y."/>
            <person name="Chen Z."/>
            <person name="Chinault C."/>
            <person name="Ciccodicola A."/>
            <person name="Clark S.Y."/>
            <person name="Clarke G."/>
            <person name="Clee C.M."/>
            <person name="Clegg S."/>
            <person name="Clerc-Blankenburg K."/>
            <person name="Clifford K."/>
            <person name="Cobley V."/>
            <person name="Cole C.G."/>
            <person name="Conquer J.S."/>
            <person name="Corby N."/>
            <person name="Connor R.E."/>
            <person name="David R."/>
            <person name="Davies J."/>
            <person name="Davis C."/>
            <person name="Davis J."/>
            <person name="Delgado O."/>
            <person name="Deshazo D."/>
            <person name="Dhami P."/>
            <person name="Ding Y."/>
            <person name="Dinh H."/>
            <person name="Dodsworth S."/>
            <person name="Draper H."/>
            <person name="Dugan-Rocha S."/>
            <person name="Dunham A."/>
            <person name="Dunn M."/>
            <person name="Durbin K.J."/>
            <person name="Dutta I."/>
            <person name="Eades T."/>
            <person name="Ellwood M."/>
            <person name="Emery-Cohen A."/>
            <person name="Errington H."/>
            <person name="Evans K.L."/>
            <person name="Faulkner L."/>
            <person name="Francis F."/>
            <person name="Frankland J."/>
            <person name="Fraser A.E."/>
            <person name="Galgoczy P."/>
            <person name="Gilbert J."/>
            <person name="Gill R."/>
            <person name="Gloeckner G."/>
            <person name="Gregory S.G."/>
            <person name="Gribble S."/>
            <person name="Griffiths C."/>
            <person name="Grocock R."/>
            <person name="Gu Y."/>
            <person name="Gwilliam R."/>
            <person name="Hamilton C."/>
            <person name="Hart E.A."/>
            <person name="Hawes A."/>
            <person name="Heath P.D."/>
            <person name="Heitmann K."/>
            <person name="Hennig S."/>
            <person name="Hernandez J."/>
            <person name="Hinzmann B."/>
            <person name="Ho S."/>
            <person name="Hoffs M."/>
            <person name="Howden P.J."/>
            <person name="Huckle E.J."/>
            <person name="Hume J."/>
            <person name="Hunt P.J."/>
            <person name="Hunt A.R."/>
            <person name="Isherwood J."/>
            <person name="Jacob L."/>
            <person name="Johnson D."/>
            <person name="Jones S."/>
            <person name="de Jong P.J."/>
            <person name="Joseph S.S."/>
            <person name="Keenan S."/>
            <person name="Kelly S."/>
            <person name="Kershaw J.K."/>
            <person name="Khan Z."/>
            <person name="Kioschis P."/>
            <person name="Klages S."/>
            <person name="Knights A.J."/>
            <person name="Kosiura A."/>
            <person name="Kovar-Smith C."/>
            <person name="Laird G.K."/>
            <person name="Langford C."/>
            <person name="Lawlor S."/>
            <person name="Leversha M."/>
            <person name="Lewis L."/>
            <person name="Liu W."/>
            <person name="Lloyd C."/>
            <person name="Lloyd D.M."/>
            <person name="Loulseged H."/>
            <person name="Loveland J.E."/>
            <person name="Lovell J.D."/>
            <person name="Lozado R."/>
            <person name="Lu J."/>
            <person name="Lyne R."/>
            <person name="Ma J."/>
            <person name="Maheshwari M."/>
            <person name="Matthews L.H."/>
            <person name="McDowall J."/>
            <person name="McLaren S."/>
            <person name="McMurray A."/>
            <person name="Meidl P."/>
            <person name="Meitinger T."/>
            <person name="Milne S."/>
            <person name="Miner G."/>
            <person name="Mistry S.L."/>
            <person name="Morgan M."/>
            <person name="Morris S."/>
            <person name="Mueller I."/>
            <person name="Mullikin J.C."/>
            <person name="Nguyen N."/>
            <person name="Nordsiek G."/>
            <person name="Nyakatura G."/>
            <person name="O'dell C.N."/>
            <person name="Okwuonu G."/>
            <person name="Palmer S."/>
            <person name="Pandian R."/>
            <person name="Parker D."/>
            <person name="Parrish J."/>
            <person name="Pasternak S."/>
            <person name="Patel D."/>
            <person name="Pearce A.V."/>
            <person name="Pearson D.M."/>
            <person name="Pelan S.E."/>
            <person name="Perez L."/>
            <person name="Porter K.M."/>
            <person name="Ramsey Y."/>
            <person name="Reichwald K."/>
            <person name="Rhodes S."/>
            <person name="Ridler K.A."/>
            <person name="Schlessinger D."/>
            <person name="Schueler M.G."/>
            <person name="Sehra H.K."/>
            <person name="Shaw-Smith C."/>
            <person name="Shen H."/>
            <person name="Sheridan E.M."/>
            <person name="Shownkeen R."/>
            <person name="Skuce C.D."/>
            <person name="Smith M.L."/>
            <person name="Sotheran E.C."/>
            <person name="Steingruber H.E."/>
            <person name="Steward C.A."/>
            <person name="Storey R."/>
            <person name="Swann R.M."/>
            <person name="Swarbreck D."/>
            <person name="Tabor P.E."/>
            <person name="Taudien S."/>
            <person name="Taylor T."/>
            <person name="Teague B."/>
            <person name="Thomas K."/>
            <person name="Thorpe A."/>
            <person name="Timms K."/>
            <person name="Tracey A."/>
            <person name="Trevanion S."/>
            <person name="Tromans A.C."/>
            <person name="d'Urso M."/>
            <person name="Verduzco D."/>
            <person name="Villasana D."/>
            <person name="Waldron L."/>
            <person name="Wall M."/>
            <person name="Wang Q."/>
            <person name="Warren J."/>
            <person name="Warry G.L."/>
            <person name="Wei X."/>
            <person name="West A."/>
            <person name="Whitehead S.L."/>
            <person name="Whiteley M.N."/>
            <person name="Wilkinson J.E."/>
            <person name="Willey D.L."/>
            <person name="Williams G."/>
            <person name="Williams L."/>
            <person name="Williamson A."/>
            <person name="Williamson H."/>
            <person name="Wilming L."/>
            <person name="Woodmansey R.L."/>
            <person name="Wray P.W."/>
            <person name="Yen J."/>
            <person name="Zhang J."/>
            <person name="Zhou J."/>
            <person name="Zoghbi H."/>
            <person name="Zorilla S."/>
            <person name="Buck D."/>
            <person name="Reinhardt R."/>
            <person name="Poustka A."/>
            <person name="Rosenthal A."/>
            <person name="Lehrach H."/>
            <person name="Meindl A."/>
            <person name="Minx P.J."/>
            <person name="Hillier L.W."/>
            <person name="Willard H.F."/>
            <person name="Wilson R.K."/>
            <person name="Waterston R.H."/>
            <person name="Rice C.M."/>
            <person name="Vaudin M."/>
            <person name="Coulson A."/>
            <person name="Nelson D.L."/>
            <person name="Weinstock G."/>
            <person name="Sulston J.E."/>
            <person name="Durbin R.M."/>
            <person name="Hubbard T."/>
            <person name="Gibbs R.A."/>
            <person name="Beck S."/>
            <person name="Rogers J."/>
            <person name="Bentley D.R."/>
        </authorList>
    </citation>
    <scope>NUCLEOTIDE SEQUENCE [LARGE SCALE GENOMIC DNA]</scope>
</reference>
<reference key="4">
    <citation type="submission" date="2005-07" db="EMBL/GenBank/DDBJ databases">
        <authorList>
            <person name="Mural R.J."/>
            <person name="Istrail S."/>
            <person name="Sutton G.G."/>
            <person name="Florea L."/>
            <person name="Halpern A.L."/>
            <person name="Mobarry C.M."/>
            <person name="Lippert R."/>
            <person name="Walenz B."/>
            <person name="Shatkay H."/>
            <person name="Dew I."/>
            <person name="Miller J.R."/>
            <person name="Flanigan M.J."/>
            <person name="Edwards N.J."/>
            <person name="Bolanos R."/>
            <person name="Fasulo D."/>
            <person name="Halldorsson B.V."/>
            <person name="Hannenhalli S."/>
            <person name="Turner R."/>
            <person name="Yooseph S."/>
            <person name="Lu F."/>
            <person name="Nusskern D.R."/>
            <person name="Shue B.C."/>
            <person name="Zheng X.H."/>
            <person name="Zhong F."/>
            <person name="Delcher A.L."/>
            <person name="Huson D.H."/>
            <person name="Kravitz S.A."/>
            <person name="Mouchard L."/>
            <person name="Reinert K."/>
            <person name="Remington K.A."/>
            <person name="Clark A.G."/>
            <person name="Waterman M.S."/>
            <person name="Eichler E.E."/>
            <person name="Adams M.D."/>
            <person name="Hunkapiller M.W."/>
            <person name="Myers E.W."/>
            <person name="Venter J.C."/>
        </authorList>
    </citation>
    <scope>NUCLEOTIDE SEQUENCE [LARGE SCALE GENOMIC DNA]</scope>
</reference>
<reference key="5">
    <citation type="journal article" date="2004" name="Genome Res.">
        <title>The status, quality, and expansion of the NIH full-length cDNA project: the Mammalian Gene Collection (MGC).</title>
        <authorList>
            <consortium name="The MGC Project Team"/>
        </authorList>
    </citation>
    <scope>NUCLEOTIDE SEQUENCE [LARGE SCALE MRNA]</scope>
    <scope>VARIANT THR-23</scope>
    <source>
        <tissue>Brain</tissue>
    </source>
</reference>
<reference key="6">
    <citation type="journal article" date="2005" name="Mol. Cell. Biol.">
        <title>Involvement of human release factors eRF3a and eRF3b in translation termination and regulation of the termination complex formation.</title>
        <authorList>
            <person name="Chauvin C."/>
            <person name="Salhi S."/>
            <person name="Le Goff C."/>
            <person name="Viranaicken W."/>
            <person name="Diop D."/>
            <person name="Jean-Jean O."/>
        </authorList>
    </citation>
    <scope>FUNCTION</scope>
    <scope>CATALYTIC ACTIVITY</scope>
</reference>
<reference key="7">
    <citation type="journal article" date="2006" name="Int. J. Cancer">
        <title>Transcriptional census of 36 microdissected colorectal cancers yields a gene signature to distinguish UICC II and III.</title>
        <authorList>
            <person name="Groene J."/>
            <person name="Mansmann U."/>
            <person name="Meister R."/>
            <person name="Staub E."/>
            <person name="Roepcke S."/>
            <person name="Heinze M."/>
            <person name="Klaman I."/>
            <person name="Bruemmendorf T."/>
            <person name="Hermann K."/>
            <person name="Loddenkemper C."/>
            <person name="Pilarsky C."/>
            <person name="Mann B."/>
            <person name="Adams H.-P."/>
            <person name="Buhr H.J."/>
            <person name="Rosenthal A."/>
        </authorList>
    </citation>
    <scope>TISSUE SPECIFICITY</scope>
</reference>
<reference key="8">
    <citation type="journal article" date="2007" name="Mol. Cell. Biol.">
        <title>Human eukaryotic release factor 3a depletion causes cell cycle arrest at G1 phase through inhibition of the mTOR pathway.</title>
        <authorList>
            <person name="Chauvin C."/>
            <person name="Salhi S."/>
            <person name="Jean-Jean O."/>
        </authorList>
    </citation>
    <scope>FUNCTION</scope>
</reference>
<reference key="9">
    <citation type="journal article" date="2008" name="PLoS Biol.">
        <title>A competition between stimulators and antagonists of Upf complex recruitment governs human nonsense-mediated mRNA decay.</title>
        <authorList>
            <person name="Singh G."/>
            <person name="Rebbapragada I."/>
            <person name="Lykke-Andersen J."/>
        </authorList>
    </citation>
    <scope>INTERACTION WITH UPF1 AND PABPC1</scope>
    <scope>MUTAGENESIS OF LEU-52; ASN-55; ALA-56 AND PHE-59</scope>
</reference>
<reference key="10">
    <citation type="journal article" date="2009" name="Genes Dev.">
        <title>SMG-8 and SMG-9, two novel subunits of the SMG-1 complex, regulate remodeling of the mRNA surveillance complex during nonsense-mediated mRNA decay.</title>
        <authorList>
            <person name="Yamashita A."/>
            <person name="Izumi N."/>
            <person name="Kashima I."/>
            <person name="Ohnishi T."/>
            <person name="Saari B."/>
            <person name="Katsuhata Y."/>
            <person name="Muramatsu R."/>
            <person name="Morita T."/>
            <person name="Iwamatsu A."/>
            <person name="Hachiya T."/>
            <person name="Kurata R."/>
            <person name="Hirano H."/>
            <person name="Anderson P."/>
            <person name="Ohno S."/>
        </authorList>
    </citation>
    <scope>IDENTIFICATION IN THE SURF COMPLEX</scope>
    <scope>FUNCTION</scope>
</reference>
<reference key="11">
    <citation type="journal article" date="2011" name="BMC Syst. Biol.">
        <title>Initial characterization of the human central proteome.</title>
        <authorList>
            <person name="Burkard T.R."/>
            <person name="Planyavsky M."/>
            <person name="Kaupe I."/>
            <person name="Breitwieser F.P."/>
            <person name="Buerckstuemmer T."/>
            <person name="Bennett K.L."/>
            <person name="Superti-Furga G."/>
            <person name="Colinge J."/>
        </authorList>
    </citation>
    <scope>IDENTIFICATION BY MASS SPECTROMETRY [LARGE SCALE ANALYSIS]</scope>
</reference>
<reference evidence="13" key="12">
    <citation type="journal article" date="2010" name="PLoS ONE">
        <title>Molecular basis of eRF3 recognition by the MLLE domain of poly(A)-binding protein.</title>
        <authorList>
            <person name="Kozlov G."/>
            <person name="Gehring K."/>
        </authorList>
    </citation>
    <scope>X-RAY CRYSTALLOGRAPHY (1.40 ANGSTROMS) OF 59-73</scope>
</reference>
<comment type="function">
    <text evidence="4 6 8 10">GTPase component of the eRF1-eRF3-GTP ternary complex, a ternary complex that mediates translation termination in response to the termination codons UAA, UAG and UGA (PubMed:11524954, PubMed:15987998, PubMed:17562865). GSPT2/ERF3B mediates ETF1/ERF1 delivery to stop codons: The eRF1-eRF3-GTP complex binds to a stop codon in the ribosomal A-site (PubMed:15987998). GTP hydrolysis by GSPT2/ERF3B induces a conformational change that leads to its dissociation, permitting ETF1/ERF1 to accommodate fully in the A-site (PubMed:15987998). Component of the transient SURF complex which recruits UPF1 to stalled ribosomes in the context of nonsense-mediated decay (NMD) of mRNAs containing premature stop codons (PubMed:19417104).</text>
</comment>
<comment type="catalytic activity">
    <reaction evidence="12">
        <text>GTP + H2O = GDP + phosphate + H(+)</text>
        <dbReference type="Rhea" id="RHEA:19669"/>
        <dbReference type="ChEBI" id="CHEBI:15377"/>
        <dbReference type="ChEBI" id="CHEBI:15378"/>
        <dbReference type="ChEBI" id="CHEBI:37565"/>
        <dbReference type="ChEBI" id="CHEBI:43474"/>
        <dbReference type="ChEBI" id="CHEBI:58189"/>
    </reaction>
    <physiologicalReaction direction="left-to-right" evidence="12">
        <dbReference type="Rhea" id="RHEA:19670"/>
    </physiologicalReaction>
</comment>
<comment type="subunit">
    <text evidence="6 9 10">Component of the eRF1-eRF3-GTP ternary complex, composed of ETF1/ERF1 and ERF3 (GSPT1/ERF3A or GSPT2/ERF3B) and GTP (PubMed:15987998). Component of the transient SURF (SMG1-UPF1-eRF1-eRF3) complex (PubMed:19417104). Interacts with UPF1 and PABPC1 (PubMed:18447585).</text>
</comment>
<comment type="interaction">
    <interactant intactId="EBI-3869637">
        <id>Q8IYD1</id>
    </interactant>
    <interactant intactId="EBI-750990">
        <id>P62495</id>
        <label>ETF1</label>
    </interactant>
    <organismsDiffer>false</organismsDiffer>
    <experiments>3</experiments>
</comment>
<comment type="interaction">
    <interactant intactId="EBI-3869637">
        <id>Q8IYD1</id>
    </interactant>
    <interactant intactId="EBI-81531">
        <id>P11940</id>
        <label>PABPC1</label>
    </interactant>
    <organismsDiffer>false</organismsDiffer>
    <experiments>10</experiments>
</comment>
<comment type="interaction">
    <interactant intactId="EBI-3869637">
        <id>Q8IYD1</id>
    </interactant>
    <interactant intactId="EBI-373471">
        <id>Q92900</id>
        <label>UPF1</label>
    </interactant>
    <organismsDiffer>false</organismsDiffer>
    <experiments>4</experiments>
</comment>
<comment type="subcellular location">
    <subcellularLocation>
        <location evidence="11">Cytoplasm</location>
    </subcellularLocation>
</comment>
<comment type="tissue specificity">
    <text evidence="7">Highly expressed in IUCC stage II colorectal cancer (CRC).</text>
</comment>
<comment type="similarity">
    <text evidence="2">Belongs to the TRAFAC class translation factor GTPase superfamily. Classic translation factor GTPase family. ERF3 subfamily.</text>
</comment>
<name>ERF3B_HUMAN</name>